<accession>Q7T2I3</accession>
<feature type="signal peptide" evidence="3">
    <location>
        <begin position="1" status="less than"/>
        <end position="20"/>
    </location>
</feature>
<feature type="chain" id="PRO_0000316166" description="Long neurotoxin LlLong">
    <location>
        <begin position="21"/>
        <end position="87"/>
    </location>
</feature>
<feature type="disulfide bond" evidence="1">
    <location>
        <begin position="23"/>
        <end position="41"/>
    </location>
</feature>
<feature type="disulfide bond" evidence="1">
    <location>
        <begin position="34"/>
        <end position="62"/>
    </location>
</feature>
<feature type="disulfide bond" evidence="1">
    <location>
        <begin position="47"/>
        <end position="51"/>
    </location>
</feature>
<feature type="disulfide bond" evidence="1">
    <location>
        <begin position="66"/>
        <end position="77"/>
    </location>
</feature>
<feature type="disulfide bond" evidence="1">
    <location>
        <begin position="78"/>
        <end position="83"/>
    </location>
</feature>
<feature type="non-terminal residue">
    <location>
        <position position="1"/>
    </location>
</feature>
<proteinExistence type="inferred from homology"/>
<reference key="1">
    <citation type="journal article" date="2003" name="Gene">
        <title>Molecular evolution and diversification of snake toxin genes, revealed by analysis of intron sequences.</title>
        <authorList>
            <person name="Fujimi T.J."/>
            <person name="Nakajyo T."/>
            <person name="Nishimura E."/>
            <person name="Ogura E."/>
            <person name="Tsuchiya T."/>
            <person name="Tamiya T."/>
        </authorList>
    </citation>
    <scope>NUCLEOTIDE SEQUENCE [GENOMIC DNA]</scope>
    <source>
        <tissue>Liver</tissue>
    </source>
</reference>
<name>3L2L_LATLA</name>
<keyword id="KW-0008">Acetylcholine receptor inhibiting toxin</keyword>
<keyword id="KW-1015">Disulfide bond</keyword>
<keyword id="KW-0872">Ion channel impairing toxin</keyword>
<keyword id="KW-0528">Neurotoxin</keyword>
<keyword id="KW-0629">Postsynaptic neurotoxin</keyword>
<keyword id="KW-1185">Reference proteome</keyword>
<keyword id="KW-0964">Secreted</keyword>
<keyword id="KW-0732">Signal</keyword>
<keyword id="KW-0800">Toxin</keyword>
<organism>
    <name type="scientific">Laticauda laticaudata</name>
    <name type="common">Blue-ringed sea krait</name>
    <name type="synonym">Blue-lipped sea krait</name>
    <dbReference type="NCBI Taxonomy" id="8630"/>
    <lineage>
        <taxon>Eukaryota</taxon>
        <taxon>Metazoa</taxon>
        <taxon>Chordata</taxon>
        <taxon>Craniata</taxon>
        <taxon>Vertebrata</taxon>
        <taxon>Euteleostomi</taxon>
        <taxon>Lepidosauria</taxon>
        <taxon>Squamata</taxon>
        <taxon>Bifurcata</taxon>
        <taxon>Unidentata</taxon>
        <taxon>Episquamata</taxon>
        <taxon>Toxicofera</taxon>
        <taxon>Serpentes</taxon>
        <taxon>Colubroidea</taxon>
        <taxon>Elapidae</taxon>
        <taxon>Laticaudinae</taxon>
        <taxon>Laticauda</taxon>
    </lineage>
</organism>
<sequence>KTLLLTLVVVTIICLDFGYTRICFKTPYVKSETCPPGQELCYTKTWCDRFCSIRGKVIELGCTATCPRAEPKEDTTCCSKDNCNPHP</sequence>
<protein>
    <recommendedName>
        <fullName>Long neurotoxin LlLong</fullName>
    </recommendedName>
</protein>
<comment type="function">
    <text evidence="2">Binds with high affinity to muscular (alpha-1/CHRNA1) and neuronal (alpha-7/CHRNA7) nicotinic acetylcholine receptor (nAChR) and inhibits acetylcholine from binding to the receptor, thereby impairing neuromuscular and neuronal transmission.</text>
</comment>
<comment type="subcellular location">
    <subcellularLocation>
        <location evidence="1">Secreted</location>
    </subcellularLocation>
</comment>
<comment type="tissue specificity">
    <text evidence="4">Expressed by the venom gland.</text>
</comment>
<comment type="similarity">
    <text evidence="4">Belongs to the three-finger toxin family. Long-chain subfamily. Type II alpha-neurotoxin sub-subfamily.</text>
</comment>
<evidence type="ECO:0000250" key="1"/>
<evidence type="ECO:0000250" key="2">
    <source>
        <dbReference type="UniProtKB" id="P60615"/>
    </source>
</evidence>
<evidence type="ECO:0000255" key="3"/>
<evidence type="ECO:0000305" key="4"/>
<dbReference type="EMBL" id="AB098533">
    <property type="protein sequence ID" value="BAC78205.1"/>
    <property type="molecule type" value="Genomic_DNA"/>
</dbReference>
<dbReference type="SMR" id="Q7T2I3"/>
<dbReference type="Proteomes" id="UP000694406">
    <property type="component" value="Unplaced"/>
</dbReference>
<dbReference type="GO" id="GO:0005576">
    <property type="term" value="C:extracellular region"/>
    <property type="evidence" value="ECO:0007669"/>
    <property type="project" value="UniProtKB-SubCell"/>
</dbReference>
<dbReference type="GO" id="GO:0030550">
    <property type="term" value="F:acetylcholine receptor inhibitor activity"/>
    <property type="evidence" value="ECO:0007669"/>
    <property type="project" value="UniProtKB-KW"/>
</dbReference>
<dbReference type="GO" id="GO:0099106">
    <property type="term" value="F:ion channel regulator activity"/>
    <property type="evidence" value="ECO:0007669"/>
    <property type="project" value="UniProtKB-KW"/>
</dbReference>
<dbReference type="GO" id="GO:0090729">
    <property type="term" value="F:toxin activity"/>
    <property type="evidence" value="ECO:0007669"/>
    <property type="project" value="UniProtKB-KW"/>
</dbReference>
<dbReference type="CDD" id="cd00206">
    <property type="entry name" value="TFP_snake_toxin"/>
    <property type="match status" value="1"/>
</dbReference>
<dbReference type="Gene3D" id="2.10.60.10">
    <property type="entry name" value="CD59"/>
    <property type="match status" value="1"/>
</dbReference>
<dbReference type="InterPro" id="IPR003571">
    <property type="entry name" value="Snake_3FTx"/>
</dbReference>
<dbReference type="InterPro" id="IPR045860">
    <property type="entry name" value="Snake_toxin-like_sf"/>
</dbReference>
<dbReference type="InterPro" id="IPR018354">
    <property type="entry name" value="Snake_toxin_con_site"/>
</dbReference>
<dbReference type="InterPro" id="IPR054131">
    <property type="entry name" value="Toxin_cobra-type"/>
</dbReference>
<dbReference type="Pfam" id="PF21947">
    <property type="entry name" value="Toxin_cobra-type"/>
    <property type="match status" value="1"/>
</dbReference>
<dbReference type="SUPFAM" id="SSF57302">
    <property type="entry name" value="Snake toxin-like"/>
    <property type="match status" value="1"/>
</dbReference>
<dbReference type="PROSITE" id="PS00272">
    <property type="entry name" value="SNAKE_TOXIN"/>
    <property type="match status" value="1"/>
</dbReference>